<feature type="chain" id="PRO_0000376611" description="NAC domain-containing protein 3">
    <location>
        <begin position="1"/>
        <end position="394"/>
    </location>
</feature>
<feature type="domain" description="NAC" evidence="1">
    <location>
        <begin position="3"/>
        <end position="147"/>
    </location>
</feature>
<feature type="DNA-binding region" evidence="1">
    <location>
        <begin position="104"/>
        <end position="153"/>
    </location>
</feature>
<feature type="region of interest" description="Disordered" evidence="2">
    <location>
        <begin position="152"/>
        <end position="173"/>
    </location>
</feature>
<feature type="region of interest" description="Disordered" evidence="2">
    <location>
        <begin position="264"/>
        <end position="300"/>
    </location>
</feature>
<feature type="compositionally biased region" description="Low complexity" evidence="2">
    <location>
        <begin position="155"/>
        <end position="165"/>
    </location>
</feature>
<feature type="compositionally biased region" description="Polar residues" evidence="2">
    <location>
        <begin position="286"/>
        <end position="300"/>
    </location>
</feature>
<organism>
    <name type="scientific">Arabidopsis thaliana</name>
    <name type="common">Mouse-ear cress</name>
    <dbReference type="NCBI Taxonomy" id="3702"/>
    <lineage>
        <taxon>Eukaryota</taxon>
        <taxon>Viridiplantae</taxon>
        <taxon>Streptophyta</taxon>
        <taxon>Embryophyta</taxon>
        <taxon>Tracheophyta</taxon>
        <taxon>Spermatophyta</taxon>
        <taxon>Magnoliopsida</taxon>
        <taxon>eudicotyledons</taxon>
        <taxon>Gunneridae</taxon>
        <taxon>Pentapetalae</taxon>
        <taxon>rosids</taxon>
        <taxon>malvids</taxon>
        <taxon>Brassicales</taxon>
        <taxon>Brassicaceae</taxon>
        <taxon>Camelineae</taxon>
        <taxon>Arabidopsis</taxon>
    </lineage>
</organism>
<gene>
    <name type="primary">NAC003</name>
    <name type="ordered locus">At1g02220</name>
    <name type="ORF">T7I23.18</name>
</gene>
<sequence>METPVGLRFCPTDEEIVVDYLWPKNSDRDTSHVDRFINTVPVCRLDPWELPCQSRIKLKDVAWCFFRPKENKYGRGDQQMRKTKSGFWKSTGRPKPIMRNRQQIGEKKILMFYTSKESKSDWVIHEYHGFSHNQMMMTYTLCKVMFNGGMREKSSSSPSSSGVSGIEQSRRDSLIPQLVNNSEGSSLHREDPSQFGDVLQEAPIEDAKLTEELVKWLMNDEDDAQIEDAIPIEEWETWLNDIDDAKEKSIMFMHDNRSDYRPPNSLTGVFSDDVSSDDNDSDLLTPKTNSIQTSSTCDSFGSSNHRIDQIKDLQESPTSTINLVSLTQEVSQALITSIDTAEKKKNPYDDAQGTEIGEHKLGQETIKKKRAGFFHRMIQKFVKKIHLCSSISRT</sequence>
<dbReference type="EMBL" id="U89959">
    <property type="protein sequence ID" value="AAC24382.1"/>
    <property type="status" value="ALT_SEQ"/>
    <property type="molecule type" value="Genomic_DNA"/>
</dbReference>
<dbReference type="EMBL" id="CP002684">
    <property type="protein sequence ID" value="AEE27404.1"/>
    <property type="molecule type" value="Genomic_DNA"/>
</dbReference>
<dbReference type="EMBL" id="BT020269">
    <property type="protein sequence ID" value="AAV84490.1"/>
    <property type="molecule type" value="mRNA"/>
</dbReference>
<dbReference type="EMBL" id="BT022063">
    <property type="protein sequence ID" value="AAY25475.1"/>
    <property type="molecule type" value="mRNA"/>
</dbReference>
<dbReference type="EMBL" id="AB493423">
    <property type="protein sequence ID" value="BAH30261.1"/>
    <property type="molecule type" value="mRNA"/>
</dbReference>
<dbReference type="RefSeq" id="NP_171725.1">
    <property type="nucleotide sequence ID" value="NM_100103.3"/>
</dbReference>
<dbReference type="SMR" id="Q5PP28"/>
<dbReference type="BioGRID" id="24711">
    <property type="interactions" value="4"/>
</dbReference>
<dbReference type="IntAct" id="Q5PP28">
    <property type="interactions" value="4"/>
</dbReference>
<dbReference type="STRING" id="3702.Q5PP28"/>
<dbReference type="iPTMnet" id="Q5PP28"/>
<dbReference type="PaxDb" id="3702-AT1G02220.1"/>
<dbReference type="EnsemblPlants" id="AT1G02220.1">
    <property type="protein sequence ID" value="AT1G02220.1"/>
    <property type="gene ID" value="AT1G02220"/>
</dbReference>
<dbReference type="GeneID" id="839476"/>
<dbReference type="Gramene" id="AT1G02220.1">
    <property type="protein sequence ID" value="AT1G02220.1"/>
    <property type="gene ID" value="AT1G02220"/>
</dbReference>
<dbReference type="KEGG" id="ath:AT1G02220"/>
<dbReference type="Araport" id="AT1G02220"/>
<dbReference type="TAIR" id="AT1G02220">
    <property type="gene designation" value="NAC003"/>
</dbReference>
<dbReference type="HOGENOM" id="CLU_035664_9_3_1"/>
<dbReference type="InParanoid" id="Q5PP28"/>
<dbReference type="OMA" id="VGHYVRP"/>
<dbReference type="PhylomeDB" id="Q5PP28"/>
<dbReference type="PRO" id="PR:Q5PP28"/>
<dbReference type="Proteomes" id="UP000006548">
    <property type="component" value="Chromosome 1"/>
</dbReference>
<dbReference type="ExpressionAtlas" id="Q5PP28">
    <property type="expression patterns" value="baseline and differential"/>
</dbReference>
<dbReference type="GO" id="GO:0005634">
    <property type="term" value="C:nucleus"/>
    <property type="evidence" value="ECO:0007669"/>
    <property type="project" value="UniProtKB-SubCell"/>
</dbReference>
<dbReference type="GO" id="GO:0005886">
    <property type="term" value="C:plasma membrane"/>
    <property type="evidence" value="ECO:0000314"/>
    <property type="project" value="TAIR"/>
</dbReference>
<dbReference type="GO" id="GO:0003700">
    <property type="term" value="F:DNA-binding transcription factor activity"/>
    <property type="evidence" value="ECO:0000250"/>
    <property type="project" value="TAIR"/>
</dbReference>
<dbReference type="GO" id="GO:0000976">
    <property type="term" value="F:transcription cis-regulatory region binding"/>
    <property type="evidence" value="ECO:0000353"/>
    <property type="project" value="TAIR"/>
</dbReference>
<dbReference type="Gene3D" id="2.170.150.80">
    <property type="entry name" value="NAC domain"/>
    <property type="match status" value="1"/>
</dbReference>
<dbReference type="InterPro" id="IPR003441">
    <property type="entry name" value="NAC-dom"/>
</dbReference>
<dbReference type="InterPro" id="IPR036093">
    <property type="entry name" value="NAC_dom_sf"/>
</dbReference>
<dbReference type="PANTHER" id="PTHR31989">
    <property type="entry name" value="NAC DOMAIN-CONTAINING PROTEIN 82-RELATED"/>
    <property type="match status" value="1"/>
</dbReference>
<dbReference type="Pfam" id="PF02365">
    <property type="entry name" value="NAM"/>
    <property type="match status" value="1"/>
</dbReference>
<dbReference type="SUPFAM" id="SSF101941">
    <property type="entry name" value="NAC domain"/>
    <property type="match status" value="1"/>
</dbReference>
<dbReference type="PROSITE" id="PS51005">
    <property type="entry name" value="NAC"/>
    <property type="match status" value="1"/>
</dbReference>
<keyword id="KW-0238">DNA-binding</keyword>
<keyword id="KW-0539">Nucleus</keyword>
<keyword id="KW-1185">Reference proteome</keyword>
<keyword id="KW-0804">Transcription</keyword>
<keyword id="KW-0805">Transcription regulation</keyword>
<protein>
    <recommendedName>
        <fullName>NAC domain-containing protein 3</fullName>
        <shortName>ANAC003</shortName>
    </recommendedName>
</protein>
<evidence type="ECO:0000255" key="1">
    <source>
        <dbReference type="PROSITE-ProRule" id="PRU00353"/>
    </source>
</evidence>
<evidence type="ECO:0000256" key="2">
    <source>
        <dbReference type="SAM" id="MobiDB-lite"/>
    </source>
</evidence>
<evidence type="ECO:0000305" key="3"/>
<name>NAC3_ARATH</name>
<accession>Q5PP28</accession>
<accession>O81912</accession>
<comment type="subcellular location">
    <subcellularLocation>
        <location evidence="3">Nucleus</location>
    </subcellularLocation>
</comment>
<comment type="domain">
    <text>The NAC domain includes a DNA-binding domain and a dimerization domain.</text>
</comment>
<comment type="sequence caution" evidence="3">
    <conflict type="erroneous gene model prediction">
        <sequence resource="EMBL-CDS" id="AAC24382"/>
    </conflict>
</comment>
<proteinExistence type="evidence at transcript level"/>
<reference key="1">
    <citation type="journal article" date="2000" name="Nature">
        <title>Sequence and analysis of chromosome 1 of the plant Arabidopsis thaliana.</title>
        <authorList>
            <person name="Theologis A."/>
            <person name="Ecker J.R."/>
            <person name="Palm C.J."/>
            <person name="Federspiel N.A."/>
            <person name="Kaul S."/>
            <person name="White O."/>
            <person name="Alonso J."/>
            <person name="Altafi H."/>
            <person name="Araujo R."/>
            <person name="Bowman C.L."/>
            <person name="Brooks S.Y."/>
            <person name="Buehler E."/>
            <person name="Chan A."/>
            <person name="Chao Q."/>
            <person name="Chen H."/>
            <person name="Cheuk R.F."/>
            <person name="Chin C.W."/>
            <person name="Chung M.K."/>
            <person name="Conn L."/>
            <person name="Conway A.B."/>
            <person name="Conway A.R."/>
            <person name="Creasy T.H."/>
            <person name="Dewar K."/>
            <person name="Dunn P."/>
            <person name="Etgu P."/>
            <person name="Feldblyum T.V."/>
            <person name="Feng J.-D."/>
            <person name="Fong B."/>
            <person name="Fujii C.Y."/>
            <person name="Gill J.E."/>
            <person name="Goldsmith A.D."/>
            <person name="Haas B."/>
            <person name="Hansen N.F."/>
            <person name="Hughes B."/>
            <person name="Huizar L."/>
            <person name="Hunter J.L."/>
            <person name="Jenkins J."/>
            <person name="Johnson-Hopson C."/>
            <person name="Khan S."/>
            <person name="Khaykin E."/>
            <person name="Kim C.J."/>
            <person name="Koo H.L."/>
            <person name="Kremenetskaia I."/>
            <person name="Kurtz D.B."/>
            <person name="Kwan A."/>
            <person name="Lam B."/>
            <person name="Langin-Hooper S."/>
            <person name="Lee A."/>
            <person name="Lee J.M."/>
            <person name="Lenz C.A."/>
            <person name="Li J.H."/>
            <person name="Li Y.-P."/>
            <person name="Lin X."/>
            <person name="Liu S.X."/>
            <person name="Liu Z.A."/>
            <person name="Luros J.S."/>
            <person name="Maiti R."/>
            <person name="Marziali A."/>
            <person name="Militscher J."/>
            <person name="Miranda M."/>
            <person name="Nguyen M."/>
            <person name="Nierman W.C."/>
            <person name="Osborne B.I."/>
            <person name="Pai G."/>
            <person name="Peterson J."/>
            <person name="Pham P.K."/>
            <person name="Rizzo M."/>
            <person name="Rooney T."/>
            <person name="Rowley D."/>
            <person name="Sakano H."/>
            <person name="Salzberg S.L."/>
            <person name="Schwartz J.R."/>
            <person name="Shinn P."/>
            <person name="Southwick A.M."/>
            <person name="Sun H."/>
            <person name="Tallon L.J."/>
            <person name="Tambunga G."/>
            <person name="Toriumi M.J."/>
            <person name="Town C.D."/>
            <person name="Utterback T."/>
            <person name="Van Aken S."/>
            <person name="Vaysberg M."/>
            <person name="Vysotskaia V.S."/>
            <person name="Walker M."/>
            <person name="Wu D."/>
            <person name="Yu G."/>
            <person name="Fraser C.M."/>
            <person name="Venter J.C."/>
            <person name="Davis R.W."/>
        </authorList>
    </citation>
    <scope>NUCLEOTIDE SEQUENCE [LARGE SCALE GENOMIC DNA]</scope>
    <source>
        <strain>cv. Columbia</strain>
    </source>
</reference>
<reference key="2">
    <citation type="journal article" date="2017" name="Plant J.">
        <title>Araport11: a complete reannotation of the Arabidopsis thaliana reference genome.</title>
        <authorList>
            <person name="Cheng C.Y."/>
            <person name="Krishnakumar V."/>
            <person name="Chan A.P."/>
            <person name="Thibaud-Nissen F."/>
            <person name="Schobel S."/>
            <person name="Town C.D."/>
        </authorList>
    </citation>
    <scope>GENOME REANNOTATION</scope>
    <source>
        <strain>cv. Columbia</strain>
    </source>
</reference>
<reference key="3">
    <citation type="submission" date="2005-05" db="EMBL/GenBank/DDBJ databases">
        <title>Arabidopsis ORF clones.</title>
        <authorList>
            <person name="Kim C.J."/>
            <person name="Chen H."/>
            <person name="Cheuk R.F."/>
            <person name="Shinn P."/>
            <person name="Ecker J.R."/>
        </authorList>
    </citation>
    <scope>NUCLEOTIDE SEQUENCE [LARGE SCALE MRNA]</scope>
    <source>
        <strain>cv. Columbia</strain>
    </source>
</reference>
<reference key="4">
    <citation type="submission" date="2009-03" db="EMBL/GenBank/DDBJ databases">
        <title>ORF cloning and analysis of Arabidopsis transcription factor genes.</title>
        <authorList>
            <person name="Fujita M."/>
            <person name="Mizukado S."/>
            <person name="Seki M."/>
            <person name="Shinozaki K."/>
            <person name="Mitsuda N."/>
            <person name="Takiguchi Y."/>
            <person name="Takagi M."/>
        </authorList>
    </citation>
    <scope>NUCLEOTIDE SEQUENCE [LARGE SCALE MRNA]</scope>
</reference>
<reference key="5">
    <citation type="journal article" date="2003" name="DNA Res.">
        <title>Comprehensive analysis of NAC family genes in Oryza sativa and Arabidopsis thaliana.</title>
        <authorList>
            <person name="Ooka H."/>
            <person name="Satoh K."/>
            <person name="Doi K."/>
            <person name="Nagata T."/>
            <person name="Otomo Y."/>
            <person name="Murakami K."/>
            <person name="Matsubara K."/>
            <person name="Osato N."/>
            <person name="Kawai J."/>
            <person name="Carninci P."/>
            <person name="Hayashizaki Y."/>
            <person name="Suzuki K."/>
            <person name="Kojima K."/>
            <person name="Takahara Y."/>
            <person name="Yamamoto K."/>
            <person name="Kikuchi S."/>
        </authorList>
    </citation>
    <scope>GENE FAMILY</scope>
    <scope>NOMENCLATURE</scope>
</reference>